<proteinExistence type="inferred from homology"/>
<feature type="chain" id="PRO_1000045752" description="Photosystem II reaction center protein Y">
    <location>
        <begin position="1"/>
        <end position="39"/>
    </location>
</feature>
<feature type="transmembrane region" description="Helical" evidence="1">
    <location>
        <begin position="4"/>
        <end position="22"/>
    </location>
</feature>
<sequence length="39" mass="4531">MLRTLVVFAPIIAALAWVIFNIQKPAREQFNRDFLGKKD</sequence>
<accession>A2BXA4</accession>
<protein>
    <recommendedName>
        <fullName evidence="1">Photosystem II reaction center protein Y</fullName>
    </recommendedName>
</protein>
<dbReference type="EMBL" id="CP000552">
    <property type="protein sequence ID" value="ABM72415.1"/>
    <property type="molecule type" value="Genomic_DNA"/>
</dbReference>
<dbReference type="RefSeq" id="WP_011820515.1">
    <property type="nucleotide sequence ID" value="NC_008817.1"/>
</dbReference>
<dbReference type="SMR" id="A2BXA4"/>
<dbReference type="STRING" id="167542.P9515_12081"/>
<dbReference type="GeneID" id="60201851"/>
<dbReference type="KEGG" id="pmc:P9515_12081"/>
<dbReference type="HOGENOM" id="CLU_218393_0_0_3"/>
<dbReference type="OrthoDB" id="541796at2"/>
<dbReference type="Proteomes" id="UP000001589">
    <property type="component" value="Chromosome"/>
</dbReference>
<dbReference type="GO" id="GO:0009523">
    <property type="term" value="C:photosystem II"/>
    <property type="evidence" value="ECO:0007669"/>
    <property type="project" value="UniProtKB-KW"/>
</dbReference>
<dbReference type="GO" id="GO:0031676">
    <property type="term" value="C:plasma membrane-derived thylakoid membrane"/>
    <property type="evidence" value="ECO:0007669"/>
    <property type="project" value="UniProtKB-SubCell"/>
</dbReference>
<dbReference type="GO" id="GO:0030145">
    <property type="term" value="F:manganese ion binding"/>
    <property type="evidence" value="ECO:0007669"/>
    <property type="project" value="InterPro"/>
</dbReference>
<dbReference type="GO" id="GO:0015979">
    <property type="term" value="P:photosynthesis"/>
    <property type="evidence" value="ECO:0007669"/>
    <property type="project" value="UniProtKB-UniRule"/>
</dbReference>
<dbReference type="HAMAP" id="MF_00717">
    <property type="entry name" value="PSII_PsbY"/>
    <property type="match status" value="1"/>
</dbReference>
<dbReference type="InterPro" id="IPR009388">
    <property type="entry name" value="PSII_PsbY"/>
</dbReference>
<dbReference type="NCBIfam" id="NF009711">
    <property type="entry name" value="PRK13240.1"/>
    <property type="match status" value="1"/>
</dbReference>
<dbReference type="Pfam" id="PF06298">
    <property type="entry name" value="PsbY"/>
    <property type="match status" value="1"/>
</dbReference>
<reference key="1">
    <citation type="journal article" date="2007" name="PLoS Genet.">
        <title>Patterns and implications of gene gain and loss in the evolution of Prochlorococcus.</title>
        <authorList>
            <person name="Kettler G.C."/>
            <person name="Martiny A.C."/>
            <person name="Huang K."/>
            <person name="Zucker J."/>
            <person name="Coleman M.L."/>
            <person name="Rodrigue S."/>
            <person name="Chen F."/>
            <person name="Lapidus A."/>
            <person name="Ferriera S."/>
            <person name="Johnson J."/>
            <person name="Steglich C."/>
            <person name="Church G.M."/>
            <person name="Richardson P."/>
            <person name="Chisholm S.W."/>
        </authorList>
    </citation>
    <scope>NUCLEOTIDE SEQUENCE [LARGE SCALE GENOMIC DNA]</scope>
    <source>
        <strain>MIT 9515</strain>
    </source>
</reference>
<keyword id="KW-0472">Membrane</keyword>
<keyword id="KW-0602">Photosynthesis</keyword>
<keyword id="KW-0604">Photosystem II</keyword>
<keyword id="KW-0793">Thylakoid</keyword>
<keyword id="KW-0812">Transmembrane</keyword>
<keyword id="KW-1133">Transmembrane helix</keyword>
<comment type="function">
    <text evidence="1">Loosely associated component of the core of photosystem II (PSII), it is not always seen in crystals. PSII is a light-driven water plastoquinone oxidoreductase, using light energy to abstract electrons from H(2)O, generating a proton gradient subsequently used for ATP formation.</text>
</comment>
<comment type="subunit">
    <text evidence="2">PSII is composed of 1 copy each of membrane proteins PsbA, PsbB, PsbC, PsbD, PsbE, PsbF, PsbH, PsbI, PsbJ, PsbK, PsbL, PsbM, PsbT, PsbX, PsbY, Psb30/Ycf12, peripheral proteins PsbO, CyanoQ (PsbQ), PsbU, PsbV and a large number of cofactors. It forms dimeric complexes.</text>
</comment>
<comment type="subcellular location">
    <subcellularLocation>
        <location evidence="1">Cellular thylakoid membrane</location>
        <topology evidence="1">Single-pass membrane protein</topology>
    </subcellularLocation>
</comment>
<comment type="similarity">
    <text evidence="1">Belongs to the PsbY family.</text>
</comment>
<name>PSBY_PROM5</name>
<organism>
    <name type="scientific">Prochlorococcus marinus (strain MIT 9515)</name>
    <dbReference type="NCBI Taxonomy" id="167542"/>
    <lineage>
        <taxon>Bacteria</taxon>
        <taxon>Bacillati</taxon>
        <taxon>Cyanobacteriota</taxon>
        <taxon>Cyanophyceae</taxon>
        <taxon>Synechococcales</taxon>
        <taxon>Prochlorococcaceae</taxon>
        <taxon>Prochlorococcus</taxon>
    </lineage>
</organism>
<evidence type="ECO:0000255" key="1">
    <source>
        <dbReference type="HAMAP-Rule" id="MF_00717"/>
    </source>
</evidence>
<evidence type="ECO:0000305" key="2"/>
<gene>
    <name evidence="1" type="primary">psbY</name>
    <name type="ordered locus">P9515_12081</name>
</gene>